<feature type="chain" id="PRO_0000047777" description="Zinc finger X-linked protein ZXDB">
    <location>
        <begin position="1"/>
        <end position="803"/>
    </location>
</feature>
<feature type="zinc finger region" description="C2H2-type 1" evidence="2">
    <location>
        <begin position="271"/>
        <end position="295"/>
    </location>
</feature>
<feature type="zinc finger region" description="C2H2-type 2" evidence="2">
    <location>
        <begin position="304"/>
        <end position="328"/>
    </location>
</feature>
<feature type="zinc finger region" description="C2H2-type 3" evidence="2">
    <location>
        <begin position="334"/>
        <end position="358"/>
    </location>
</feature>
<feature type="zinc finger region" description="C2H2-type 4" evidence="2">
    <location>
        <begin position="364"/>
        <end position="386"/>
    </location>
</feature>
<feature type="zinc finger region" description="C2H2-type 5" evidence="2">
    <location>
        <begin position="393"/>
        <end position="417"/>
    </location>
</feature>
<feature type="zinc finger region" description="C2H2-type 6" evidence="2">
    <location>
        <begin position="424"/>
        <end position="448"/>
    </location>
</feature>
<feature type="zinc finger region" description="C2H2-type 7" evidence="2">
    <location>
        <begin position="454"/>
        <end position="478"/>
    </location>
</feature>
<feature type="zinc finger region" description="C2H2-type 8" evidence="2">
    <location>
        <begin position="484"/>
        <end position="508"/>
    </location>
</feature>
<feature type="zinc finger region" description="C2H2-type 9" evidence="2">
    <location>
        <begin position="514"/>
        <end position="538"/>
    </location>
</feature>
<feature type="zinc finger region" description="C2H2-type 10" evidence="2">
    <location>
        <begin position="547"/>
        <end position="572"/>
    </location>
</feature>
<feature type="region of interest" description="Disordered" evidence="3">
    <location>
        <begin position="1"/>
        <end position="91"/>
    </location>
</feature>
<feature type="region of interest" description="Disordered" evidence="3">
    <location>
        <begin position="120"/>
        <end position="140"/>
    </location>
</feature>
<feature type="region of interest" description="Disordered" evidence="3">
    <location>
        <begin position="218"/>
        <end position="260"/>
    </location>
</feature>
<feature type="region of interest" description="Required for interaction with ZXDC" evidence="1">
    <location>
        <begin position="271"/>
        <end position="577"/>
    </location>
</feature>
<feature type="region of interest" description="Required for transcriptional activation" evidence="1">
    <location>
        <begin position="576"/>
        <end position="703"/>
    </location>
</feature>
<feature type="compositionally biased region" description="Gly residues" evidence="3">
    <location>
        <begin position="13"/>
        <end position="26"/>
    </location>
</feature>
<feature type="sequence variant" id="VAR_033003" description="In dbSNP:rs1057338.">
    <original>A</original>
    <variation>T</variation>
    <location>
        <position position="736"/>
    </location>
</feature>
<feature type="sequence variant" id="VAR_033004" description="In dbSNP:rs1057340.">
    <original>N</original>
    <variation>S</variation>
    <location>
        <position position="760"/>
    </location>
</feature>
<feature type="sequence variant" id="VAR_033005" description="In dbSNP:rs1057341.">
    <original>D</original>
    <variation>N</variation>
    <location>
        <position position="764"/>
    </location>
</feature>
<feature type="sequence variant" id="VAR_033006" description="In dbSNP:rs1057343.">
    <original>T</original>
    <variation>R</variation>
    <location>
        <position position="791"/>
    </location>
</feature>
<gene>
    <name type="primary">ZXDB</name>
</gene>
<organism>
    <name type="scientific">Homo sapiens</name>
    <name type="common">Human</name>
    <dbReference type="NCBI Taxonomy" id="9606"/>
    <lineage>
        <taxon>Eukaryota</taxon>
        <taxon>Metazoa</taxon>
        <taxon>Chordata</taxon>
        <taxon>Craniata</taxon>
        <taxon>Vertebrata</taxon>
        <taxon>Euteleostomi</taxon>
        <taxon>Mammalia</taxon>
        <taxon>Eutheria</taxon>
        <taxon>Euarchontoglires</taxon>
        <taxon>Primates</taxon>
        <taxon>Haplorrhini</taxon>
        <taxon>Catarrhini</taxon>
        <taxon>Hominidae</taxon>
        <taxon>Homo</taxon>
    </lineage>
</organism>
<protein>
    <recommendedName>
        <fullName>Zinc finger X-linked protein ZXDB</fullName>
    </recommendedName>
</protein>
<comment type="function">
    <text evidence="1">Cooperates with CIITA to promote transcription of MHC class I and MHC class II genes.</text>
</comment>
<comment type="subunit">
    <text evidence="1">Self-associates. Interacts with ZXDC and CIITA (By similarity).</text>
</comment>
<comment type="interaction">
    <interactant intactId="EBI-17493569">
        <id>P98169</id>
    </interactant>
    <interactant intactId="EBI-299104">
        <id>P38919</id>
        <label>EIF4A3</label>
    </interactant>
    <organismsDiffer>false</organismsDiffer>
    <experiments>3</experiments>
</comment>
<comment type="interaction">
    <interactant intactId="EBI-17493569">
        <id>P98169</id>
    </interactant>
    <interactant intactId="EBI-2511991">
        <id>Q9Y2K6</id>
        <label>USP20</label>
    </interactant>
    <organismsDiffer>false</organismsDiffer>
    <experiments>3</experiments>
</comment>
<comment type="interaction">
    <interactant intactId="EBI-17493569">
        <id>P98169</id>
    </interactant>
    <interactant intactId="EBI-10183064">
        <id>Q8N5A5-2</id>
        <label>ZGPAT</label>
    </interactant>
    <organismsDiffer>false</organismsDiffer>
    <experiments>3</experiments>
</comment>
<comment type="subcellular location">
    <subcellularLocation>
        <location evidence="5">Nucleus</location>
    </subcellularLocation>
</comment>
<comment type="tissue specificity">
    <text evidence="4">May be expressed in brain, heart, kidney, liver, lung, muscle and placenta.</text>
</comment>
<comment type="similarity">
    <text evidence="5">Belongs to the ZXD family.</text>
</comment>
<keyword id="KW-0010">Activator</keyword>
<keyword id="KW-0479">Metal-binding</keyword>
<keyword id="KW-0539">Nucleus</keyword>
<keyword id="KW-1267">Proteomics identification</keyword>
<keyword id="KW-1185">Reference proteome</keyword>
<keyword id="KW-0677">Repeat</keyword>
<keyword id="KW-0804">Transcription</keyword>
<keyword id="KW-0805">Transcription regulation</keyword>
<keyword id="KW-0862">Zinc</keyword>
<keyword id="KW-0863">Zinc-finger</keyword>
<reference key="1">
    <citation type="journal article" date="2004" name="Nat. Genet.">
        <title>Complete sequencing and characterization of 21,243 full-length human cDNAs.</title>
        <authorList>
            <person name="Ota T."/>
            <person name="Suzuki Y."/>
            <person name="Nishikawa T."/>
            <person name="Otsuki T."/>
            <person name="Sugiyama T."/>
            <person name="Irie R."/>
            <person name="Wakamatsu A."/>
            <person name="Hayashi K."/>
            <person name="Sato H."/>
            <person name="Nagai K."/>
            <person name="Kimura K."/>
            <person name="Makita H."/>
            <person name="Sekine M."/>
            <person name="Obayashi M."/>
            <person name="Nishi T."/>
            <person name="Shibahara T."/>
            <person name="Tanaka T."/>
            <person name="Ishii S."/>
            <person name="Yamamoto J."/>
            <person name="Saito K."/>
            <person name="Kawai Y."/>
            <person name="Isono Y."/>
            <person name="Nakamura Y."/>
            <person name="Nagahari K."/>
            <person name="Murakami K."/>
            <person name="Yasuda T."/>
            <person name="Iwayanagi T."/>
            <person name="Wagatsuma M."/>
            <person name="Shiratori A."/>
            <person name="Sudo H."/>
            <person name="Hosoiri T."/>
            <person name="Kaku Y."/>
            <person name="Kodaira H."/>
            <person name="Kondo H."/>
            <person name="Sugawara M."/>
            <person name="Takahashi M."/>
            <person name="Kanda K."/>
            <person name="Yokoi T."/>
            <person name="Furuya T."/>
            <person name="Kikkawa E."/>
            <person name="Omura Y."/>
            <person name="Abe K."/>
            <person name="Kamihara K."/>
            <person name="Katsuta N."/>
            <person name="Sato K."/>
            <person name="Tanikawa M."/>
            <person name="Yamazaki M."/>
            <person name="Ninomiya K."/>
            <person name="Ishibashi T."/>
            <person name="Yamashita H."/>
            <person name="Murakawa K."/>
            <person name="Fujimori K."/>
            <person name="Tanai H."/>
            <person name="Kimata M."/>
            <person name="Watanabe M."/>
            <person name="Hiraoka S."/>
            <person name="Chiba Y."/>
            <person name="Ishida S."/>
            <person name="Ono Y."/>
            <person name="Takiguchi S."/>
            <person name="Watanabe S."/>
            <person name="Yosida M."/>
            <person name="Hotuta T."/>
            <person name="Kusano J."/>
            <person name="Kanehori K."/>
            <person name="Takahashi-Fujii A."/>
            <person name="Hara H."/>
            <person name="Tanase T.-O."/>
            <person name="Nomura Y."/>
            <person name="Togiya S."/>
            <person name="Komai F."/>
            <person name="Hara R."/>
            <person name="Takeuchi K."/>
            <person name="Arita M."/>
            <person name="Imose N."/>
            <person name="Musashino K."/>
            <person name="Yuuki H."/>
            <person name="Oshima A."/>
            <person name="Sasaki N."/>
            <person name="Aotsuka S."/>
            <person name="Yoshikawa Y."/>
            <person name="Matsunawa H."/>
            <person name="Ichihara T."/>
            <person name="Shiohata N."/>
            <person name="Sano S."/>
            <person name="Moriya S."/>
            <person name="Momiyama H."/>
            <person name="Satoh N."/>
            <person name="Takami S."/>
            <person name="Terashima Y."/>
            <person name="Suzuki O."/>
            <person name="Nakagawa S."/>
            <person name="Senoh A."/>
            <person name="Mizoguchi H."/>
            <person name="Goto Y."/>
            <person name="Shimizu F."/>
            <person name="Wakebe H."/>
            <person name="Hishigaki H."/>
            <person name="Watanabe T."/>
            <person name="Sugiyama A."/>
            <person name="Takemoto M."/>
            <person name="Kawakami B."/>
            <person name="Yamazaki M."/>
            <person name="Watanabe K."/>
            <person name="Kumagai A."/>
            <person name="Itakura S."/>
            <person name="Fukuzumi Y."/>
            <person name="Fujimori Y."/>
            <person name="Komiyama M."/>
            <person name="Tashiro H."/>
            <person name="Tanigami A."/>
            <person name="Fujiwara T."/>
            <person name="Ono T."/>
            <person name="Yamada K."/>
            <person name="Fujii Y."/>
            <person name="Ozaki K."/>
            <person name="Hirao M."/>
            <person name="Ohmori Y."/>
            <person name="Kawabata A."/>
            <person name="Hikiji T."/>
            <person name="Kobatake N."/>
            <person name="Inagaki H."/>
            <person name="Ikema Y."/>
            <person name="Okamoto S."/>
            <person name="Okitani R."/>
            <person name="Kawakami T."/>
            <person name="Noguchi S."/>
            <person name="Itoh T."/>
            <person name="Shigeta K."/>
            <person name="Senba T."/>
            <person name="Matsumura K."/>
            <person name="Nakajima Y."/>
            <person name="Mizuno T."/>
            <person name="Morinaga M."/>
            <person name="Sasaki M."/>
            <person name="Togashi T."/>
            <person name="Oyama M."/>
            <person name="Hata H."/>
            <person name="Watanabe M."/>
            <person name="Komatsu T."/>
            <person name="Mizushima-Sugano J."/>
            <person name="Satoh T."/>
            <person name="Shirai Y."/>
            <person name="Takahashi Y."/>
            <person name="Nakagawa K."/>
            <person name="Okumura K."/>
            <person name="Nagase T."/>
            <person name="Nomura N."/>
            <person name="Kikuchi H."/>
            <person name="Masuho Y."/>
            <person name="Yamashita R."/>
            <person name="Nakai K."/>
            <person name="Yada T."/>
            <person name="Nakamura Y."/>
            <person name="Ohara O."/>
            <person name="Isogai T."/>
            <person name="Sugano S."/>
        </authorList>
    </citation>
    <scope>NUCLEOTIDE SEQUENCE [LARGE SCALE MRNA]</scope>
    <source>
        <tissue>Brain</tissue>
    </source>
</reference>
<reference key="2">
    <citation type="journal article" date="2005" name="Nature">
        <title>The DNA sequence of the human X chromosome.</title>
        <authorList>
            <person name="Ross M.T."/>
            <person name="Grafham D.V."/>
            <person name="Coffey A.J."/>
            <person name="Scherer S."/>
            <person name="McLay K."/>
            <person name="Muzny D."/>
            <person name="Platzer M."/>
            <person name="Howell G.R."/>
            <person name="Burrows C."/>
            <person name="Bird C.P."/>
            <person name="Frankish A."/>
            <person name="Lovell F.L."/>
            <person name="Howe K.L."/>
            <person name="Ashurst J.L."/>
            <person name="Fulton R.S."/>
            <person name="Sudbrak R."/>
            <person name="Wen G."/>
            <person name="Jones M.C."/>
            <person name="Hurles M.E."/>
            <person name="Andrews T.D."/>
            <person name="Scott C.E."/>
            <person name="Searle S."/>
            <person name="Ramser J."/>
            <person name="Whittaker A."/>
            <person name="Deadman R."/>
            <person name="Carter N.P."/>
            <person name="Hunt S.E."/>
            <person name="Chen R."/>
            <person name="Cree A."/>
            <person name="Gunaratne P."/>
            <person name="Havlak P."/>
            <person name="Hodgson A."/>
            <person name="Metzker M.L."/>
            <person name="Richards S."/>
            <person name="Scott G."/>
            <person name="Steffen D."/>
            <person name="Sodergren E."/>
            <person name="Wheeler D.A."/>
            <person name="Worley K.C."/>
            <person name="Ainscough R."/>
            <person name="Ambrose K.D."/>
            <person name="Ansari-Lari M.A."/>
            <person name="Aradhya S."/>
            <person name="Ashwell R.I."/>
            <person name="Babbage A.K."/>
            <person name="Bagguley C.L."/>
            <person name="Ballabio A."/>
            <person name="Banerjee R."/>
            <person name="Barker G.E."/>
            <person name="Barlow K.F."/>
            <person name="Barrett I.P."/>
            <person name="Bates K.N."/>
            <person name="Beare D.M."/>
            <person name="Beasley H."/>
            <person name="Beasley O."/>
            <person name="Beck A."/>
            <person name="Bethel G."/>
            <person name="Blechschmidt K."/>
            <person name="Brady N."/>
            <person name="Bray-Allen S."/>
            <person name="Bridgeman A.M."/>
            <person name="Brown A.J."/>
            <person name="Brown M.J."/>
            <person name="Bonnin D."/>
            <person name="Bruford E.A."/>
            <person name="Buhay C."/>
            <person name="Burch P."/>
            <person name="Burford D."/>
            <person name="Burgess J."/>
            <person name="Burrill W."/>
            <person name="Burton J."/>
            <person name="Bye J.M."/>
            <person name="Carder C."/>
            <person name="Carrel L."/>
            <person name="Chako J."/>
            <person name="Chapman J.C."/>
            <person name="Chavez D."/>
            <person name="Chen E."/>
            <person name="Chen G."/>
            <person name="Chen Y."/>
            <person name="Chen Z."/>
            <person name="Chinault C."/>
            <person name="Ciccodicola A."/>
            <person name="Clark S.Y."/>
            <person name="Clarke G."/>
            <person name="Clee C.M."/>
            <person name="Clegg S."/>
            <person name="Clerc-Blankenburg K."/>
            <person name="Clifford K."/>
            <person name="Cobley V."/>
            <person name="Cole C.G."/>
            <person name="Conquer J.S."/>
            <person name="Corby N."/>
            <person name="Connor R.E."/>
            <person name="David R."/>
            <person name="Davies J."/>
            <person name="Davis C."/>
            <person name="Davis J."/>
            <person name="Delgado O."/>
            <person name="Deshazo D."/>
            <person name="Dhami P."/>
            <person name="Ding Y."/>
            <person name="Dinh H."/>
            <person name="Dodsworth S."/>
            <person name="Draper H."/>
            <person name="Dugan-Rocha S."/>
            <person name="Dunham A."/>
            <person name="Dunn M."/>
            <person name="Durbin K.J."/>
            <person name="Dutta I."/>
            <person name="Eades T."/>
            <person name="Ellwood M."/>
            <person name="Emery-Cohen A."/>
            <person name="Errington H."/>
            <person name="Evans K.L."/>
            <person name="Faulkner L."/>
            <person name="Francis F."/>
            <person name="Frankland J."/>
            <person name="Fraser A.E."/>
            <person name="Galgoczy P."/>
            <person name="Gilbert J."/>
            <person name="Gill R."/>
            <person name="Gloeckner G."/>
            <person name="Gregory S.G."/>
            <person name="Gribble S."/>
            <person name="Griffiths C."/>
            <person name="Grocock R."/>
            <person name="Gu Y."/>
            <person name="Gwilliam R."/>
            <person name="Hamilton C."/>
            <person name="Hart E.A."/>
            <person name="Hawes A."/>
            <person name="Heath P.D."/>
            <person name="Heitmann K."/>
            <person name="Hennig S."/>
            <person name="Hernandez J."/>
            <person name="Hinzmann B."/>
            <person name="Ho S."/>
            <person name="Hoffs M."/>
            <person name="Howden P.J."/>
            <person name="Huckle E.J."/>
            <person name="Hume J."/>
            <person name="Hunt P.J."/>
            <person name="Hunt A.R."/>
            <person name="Isherwood J."/>
            <person name="Jacob L."/>
            <person name="Johnson D."/>
            <person name="Jones S."/>
            <person name="de Jong P.J."/>
            <person name="Joseph S.S."/>
            <person name="Keenan S."/>
            <person name="Kelly S."/>
            <person name="Kershaw J.K."/>
            <person name="Khan Z."/>
            <person name="Kioschis P."/>
            <person name="Klages S."/>
            <person name="Knights A.J."/>
            <person name="Kosiura A."/>
            <person name="Kovar-Smith C."/>
            <person name="Laird G.K."/>
            <person name="Langford C."/>
            <person name="Lawlor S."/>
            <person name="Leversha M."/>
            <person name="Lewis L."/>
            <person name="Liu W."/>
            <person name="Lloyd C."/>
            <person name="Lloyd D.M."/>
            <person name="Loulseged H."/>
            <person name="Loveland J.E."/>
            <person name="Lovell J.D."/>
            <person name="Lozado R."/>
            <person name="Lu J."/>
            <person name="Lyne R."/>
            <person name="Ma J."/>
            <person name="Maheshwari M."/>
            <person name="Matthews L.H."/>
            <person name="McDowall J."/>
            <person name="McLaren S."/>
            <person name="McMurray A."/>
            <person name="Meidl P."/>
            <person name="Meitinger T."/>
            <person name="Milne S."/>
            <person name="Miner G."/>
            <person name="Mistry S.L."/>
            <person name="Morgan M."/>
            <person name="Morris S."/>
            <person name="Mueller I."/>
            <person name="Mullikin J.C."/>
            <person name="Nguyen N."/>
            <person name="Nordsiek G."/>
            <person name="Nyakatura G."/>
            <person name="O'dell C.N."/>
            <person name="Okwuonu G."/>
            <person name="Palmer S."/>
            <person name="Pandian R."/>
            <person name="Parker D."/>
            <person name="Parrish J."/>
            <person name="Pasternak S."/>
            <person name="Patel D."/>
            <person name="Pearce A.V."/>
            <person name="Pearson D.M."/>
            <person name="Pelan S.E."/>
            <person name="Perez L."/>
            <person name="Porter K.M."/>
            <person name="Ramsey Y."/>
            <person name="Reichwald K."/>
            <person name="Rhodes S."/>
            <person name="Ridler K.A."/>
            <person name="Schlessinger D."/>
            <person name="Schueler M.G."/>
            <person name="Sehra H.K."/>
            <person name="Shaw-Smith C."/>
            <person name="Shen H."/>
            <person name="Sheridan E.M."/>
            <person name="Shownkeen R."/>
            <person name="Skuce C.D."/>
            <person name="Smith M.L."/>
            <person name="Sotheran E.C."/>
            <person name="Steingruber H.E."/>
            <person name="Steward C.A."/>
            <person name="Storey R."/>
            <person name="Swann R.M."/>
            <person name="Swarbreck D."/>
            <person name="Tabor P.E."/>
            <person name="Taudien S."/>
            <person name="Taylor T."/>
            <person name="Teague B."/>
            <person name="Thomas K."/>
            <person name="Thorpe A."/>
            <person name="Timms K."/>
            <person name="Tracey A."/>
            <person name="Trevanion S."/>
            <person name="Tromans A.C."/>
            <person name="d'Urso M."/>
            <person name="Verduzco D."/>
            <person name="Villasana D."/>
            <person name="Waldron L."/>
            <person name="Wall M."/>
            <person name="Wang Q."/>
            <person name="Warren J."/>
            <person name="Warry G.L."/>
            <person name="Wei X."/>
            <person name="West A."/>
            <person name="Whitehead S.L."/>
            <person name="Whiteley M.N."/>
            <person name="Wilkinson J.E."/>
            <person name="Willey D.L."/>
            <person name="Williams G."/>
            <person name="Williams L."/>
            <person name="Williamson A."/>
            <person name="Williamson H."/>
            <person name="Wilming L."/>
            <person name="Woodmansey R.L."/>
            <person name="Wray P.W."/>
            <person name="Yen J."/>
            <person name="Zhang J."/>
            <person name="Zhou J."/>
            <person name="Zoghbi H."/>
            <person name="Zorilla S."/>
            <person name="Buck D."/>
            <person name="Reinhardt R."/>
            <person name="Poustka A."/>
            <person name="Rosenthal A."/>
            <person name="Lehrach H."/>
            <person name="Meindl A."/>
            <person name="Minx P.J."/>
            <person name="Hillier L.W."/>
            <person name="Willard H.F."/>
            <person name="Wilson R.K."/>
            <person name="Waterston R.H."/>
            <person name="Rice C.M."/>
            <person name="Vaudin M."/>
            <person name="Coulson A."/>
            <person name="Nelson D.L."/>
            <person name="Weinstock G."/>
            <person name="Sulston J.E."/>
            <person name="Durbin R.M."/>
            <person name="Hubbard T."/>
            <person name="Gibbs R.A."/>
            <person name="Beck S."/>
            <person name="Rogers J."/>
            <person name="Bentley D.R."/>
        </authorList>
    </citation>
    <scope>NUCLEOTIDE SEQUENCE [LARGE SCALE GENOMIC DNA]</scope>
</reference>
<reference key="3">
    <citation type="submission" date="2005-07" db="EMBL/GenBank/DDBJ databases">
        <authorList>
            <person name="Mural R.J."/>
            <person name="Istrail S."/>
            <person name="Sutton G.G."/>
            <person name="Florea L."/>
            <person name="Halpern A.L."/>
            <person name="Mobarry C.M."/>
            <person name="Lippert R."/>
            <person name="Walenz B."/>
            <person name="Shatkay H."/>
            <person name="Dew I."/>
            <person name="Miller J.R."/>
            <person name="Flanigan M.J."/>
            <person name="Edwards N.J."/>
            <person name="Bolanos R."/>
            <person name="Fasulo D."/>
            <person name="Halldorsson B.V."/>
            <person name="Hannenhalli S."/>
            <person name="Turner R."/>
            <person name="Yooseph S."/>
            <person name="Lu F."/>
            <person name="Nusskern D.R."/>
            <person name="Shue B.C."/>
            <person name="Zheng X.H."/>
            <person name="Zhong F."/>
            <person name="Delcher A.L."/>
            <person name="Huson D.H."/>
            <person name="Kravitz S.A."/>
            <person name="Mouchard L."/>
            <person name="Reinert K."/>
            <person name="Remington K.A."/>
            <person name="Clark A.G."/>
            <person name="Waterman M.S."/>
            <person name="Eichler E.E."/>
            <person name="Adams M.D."/>
            <person name="Hunkapiller M.W."/>
            <person name="Myers E.W."/>
            <person name="Venter J.C."/>
        </authorList>
    </citation>
    <scope>NUCLEOTIDE SEQUENCE [LARGE SCALE GENOMIC DNA]</scope>
</reference>
<reference key="4">
    <citation type="journal article" date="1993" name="Hum. Mol. Genet.">
        <title>Duplicated zinc finger protein genes on the proximal short arm of the human X chromosome: isolation, characterization and X-inactivation studies.</title>
        <authorList>
            <person name="Greig G.M."/>
            <person name="Sharp C.B."/>
            <person name="Carrel L."/>
            <person name="Willard H.F."/>
        </authorList>
    </citation>
    <scope>NUCLEOTIDE SEQUENCE [MRNA] OF 307-709</scope>
    <scope>TISSUE SPECIFICITY</scope>
    <source>
        <tissue>Brain</tissue>
    </source>
</reference>
<dbReference type="EMBL" id="AK289766">
    <property type="protein sequence ID" value="BAF82455.1"/>
    <property type="molecule type" value="mRNA"/>
</dbReference>
<dbReference type="EMBL" id="AL031115">
    <property type="status" value="NOT_ANNOTATED_CDS"/>
    <property type="molecule type" value="Genomic_DNA"/>
</dbReference>
<dbReference type="EMBL" id="Z99130">
    <property type="protein sequence ID" value="CAB16205.1"/>
    <property type="molecule type" value="Genomic_DNA"/>
</dbReference>
<dbReference type="EMBL" id="CH471154">
    <property type="protein sequence ID" value="EAW93246.1"/>
    <property type="molecule type" value="Genomic_DNA"/>
</dbReference>
<dbReference type="EMBL" id="L14788">
    <property type="protein sequence ID" value="AAC37522.1"/>
    <property type="molecule type" value="mRNA"/>
</dbReference>
<dbReference type="CCDS" id="CCDS35313.1"/>
<dbReference type="PIR" id="I54340">
    <property type="entry name" value="I54340"/>
</dbReference>
<dbReference type="RefSeq" id="NP_009088.1">
    <property type="nucleotide sequence ID" value="NM_007157.4"/>
</dbReference>
<dbReference type="SMR" id="P98169"/>
<dbReference type="BioGRID" id="127694">
    <property type="interactions" value="20"/>
</dbReference>
<dbReference type="FunCoup" id="P98169">
    <property type="interactions" value="257"/>
</dbReference>
<dbReference type="IntAct" id="P98169">
    <property type="interactions" value="16"/>
</dbReference>
<dbReference type="STRING" id="9606.ENSP00000364023"/>
<dbReference type="GlyGen" id="P98169">
    <property type="glycosylation" value="1 site"/>
</dbReference>
<dbReference type="iPTMnet" id="P98169"/>
<dbReference type="PhosphoSitePlus" id="P98169"/>
<dbReference type="BioMuta" id="ZXDB"/>
<dbReference type="DMDM" id="12644370"/>
<dbReference type="jPOST" id="P98169"/>
<dbReference type="MassIVE" id="P98169"/>
<dbReference type="PaxDb" id="9606-ENSP00000364023"/>
<dbReference type="PeptideAtlas" id="P98169"/>
<dbReference type="ProteomicsDB" id="57802"/>
<dbReference type="Antibodypedia" id="77180">
    <property type="antibodies" value="4 antibodies from 4 providers"/>
</dbReference>
<dbReference type="DNASU" id="158586"/>
<dbReference type="Ensembl" id="ENST00000374888.3">
    <property type="protein sequence ID" value="ENSP00000364023.1"/>
    <property type="gene ID" value="ENSG00000198455.5"/>
</dbReference>
<dbReference type="GeneID" id="158586"/>
<dbReference type="KEGG" id="hsa:158586"/>
<dbReference type="MANE-Select" id="ENST00000374888.3">
    <property type="protein sequence ID" value="ENSP00000364023.1"/>
    <property type="RefSeq nucleotide sequence ID" value="NM_007157.4"/>
    <property type="RefSeq protein sequence ID" value="NP_009088.1"/>
</dbReference>
<dbReference type="UCSC" id="uc004dvd.4">
    <property type="organism name" value="human"/>
</dbReference>
<dbReference type="AGR" id="HGNC:13199"/>
<dbReference type="CTD" id="158586"/>
<dbReference type="GeneCards" id="ZXDB"/>
<dbReference type="HGNC" id="HGNC:13199">
    <property type="gene designation" value="ZXDB"/>
</dbReference>
<dbReference type="HPA" id="ENSG00000198455">
    <property type="expression patterns" value="Low tissue specificity"/>
</dbReference>
<dbReference type="MIM" id="300236">
    <property type="type" value="gene"/>
</dbReference>
<dbReference type="neXtProt" id="NX_P98169"/>
<dbReference type="OpenTargets" id="ENSG00000198455"/>
<dbReference type="PharmGKB" id="PA37764"/>
<dbReference type="VEuPathDB" id="HostDB:ENSG00000198455"/>
<dbReference type="eggNOG" id="KOG1721">
    <property type="taxonomic scope" value="Eukaryota"/>
</dbReference>
<dbReference type="GeneTree" id="ENSGT00940000164739"/>
<dbReference type="HOGENOM" id="CLU_007312_0_0_1"/>
<dbReference type="InParanoid" id="P98169"/>
<dbReference type="OMA" id="LICQYIF"/>
<dbReference type="OrthoDB" id="6277246at2759"/>
<dbReference type="PAN-GO" id="P98169">
    <property type="GO annotations" value="3 GO annotations based on evolutionary models"/>
</dbReference>
<dbReference type="PhylomeDB" id="P98169"/>
<dbReference type="TreeFam" id="TF330996"/>
<dbReference type="PathwayCommons" id="P98169"/>
<dbReference type="SignaLink" id="P98169"/>
<dbReference type="BioGRID-ORCS" id="158586">
    <property type="hits" value="13 hits in 724 CRISPR screens"/>
</dbReference>
<dbReference type="ChiTaRS" id="ZXDB">
    <property type="organism name" value="human"/>
</dbReference>
<dbReference type="GenomeRNAi" id="158586"/>
<dbReference type="Pharos" id="P98169">
    <property type="development level" value="Tdark"/>
</dbReference>
<dbReference type="PRO" id="PR:P98169"/>
<dbReference type="Proteomes" id="UP000005640">
    <property type="component" value="Chromosome X"/>
</dbReference>
<dbReference type="RNAct" id="P98169">
    <property type="molecule type" value="protein"/>
</dbReference>
<dbReference type="Bgee" id="ENSG00000198455">
    <property type="expression patterns" value="Expressed in germinal epithelium of ovary and 155 other cell types or tissues"/>
</dbReference>
<dbReference type="GO" id="GO:0005634">
    <property type="term" value="C:nucleus"/>
    <property type="evidence" value="ECO:0000318"/>
    <property type="project" value="GO_Central"/>
</dbReference>
<dbReference type="GO" id="GO:0003712">
    <property type="term" value="F:transcription coregulator activity"/>
    <property type="evidence" value="ECO:0000318"/>
    <property type="project" value="GO_Central"/>
</dbReference>
<dbReference type="GO" id="GO:0008270">
    <property type="term" value="F:zinc ion binding"/>
    <property type="evidence" value="ECO:0007669"/>
    <property type="project" value="UniProtKB-KW"/>
</dbReference>
<dbReference type="GO" id="GO:0006357">
    <property type="term" value="P:regulation of transcription by RNA polymerase II"/>
    <property type="evidence" value="ECO:0000318"/>
    <property type="project" value="GO_Central"/>
</dbReference>
<dbReference type="FunFam" id="3.30.160.60:FF:000543">
    <property type="entry name" value="Zinc finger protein 384 like"/>
    <property type="match status" value="1"/>
</dbReference>
<dbReference type="FunFam" id="3.30.160.60:FF:001568">
    <property type="entry name" value="Zinc finger X-linked protein ZXDB"/>
    <property type="match status" value="1"/>
</dbReference>
<dbReference type="FunFam" id="3.30.160.60:FF:000872">
    <property type="entry name" value="zinc finger X-linked protein ZXDB"/>
    <property type="match status" value="1"/>
</dbReference>
<dbReference type="FunFam" id="3.30.160.60:FF:000257">
    <property type="entry name" value="ZXD family zinc finger C"/>
    <property type="match status" value="3"/>
</dbReference>
<dbReference type="FunFam" id="3.30.160.60:FF:000499">
    <property type="entry name" value="ZXD family zinc finger C"/>
    <property type="match status" value="1"/>
</dbReference>
<dbReference type="FunFam" id="3.30.160.60:FF:001192">
    <property type="entry name" value="ZXD family zinc finger C"/>
    <property type="match status" value="1"/>
</dbReference>
<dbReference type="Gene3D" id="3.30.160.60">
    <property type="entry name" value="Classic Zinc Finger"/>
    <property type="match status" value="9"/>
</dbReference>
<dbReference type="InterPro" id="IPR051061">
    <property type="entry name" value="Zinc_finger_trans_reg"/>
</dbReference>
<dbReference type="InterPro" id="IPR036236">
    <property type="entry name" value="Znf_C2H2_sf"/>
</dbReference>
<dbReference type="InterPro" id="IPR013087">
    <property type="entry name" value="Znf_C2H2_type"/>
</dbReference>
<dbReference type="PANTHER" id="PTHR46179">
    <property type="entry name" value="ZINC FINGER PROTEIN"/>
    <property type="match status" value="1"/>
</dbReference>
<dbReference type="PANTHER" id="PTHR46179:SF6">
    <property type="entry name" value="ZINC FINGER X-LINKED PROTEIN ZXDA"/>
    <property type="match status" value="1"/>
</dbReference>
<dbReference type="Pfam" id="PF00096">
    <property type="entry name" value="zf-C2H2"/>
    <property type="match status" value="5"/>
</dbReference>
<dbReference type="SMART" id="SM00355">
    <property type="entry name" value="ZnF_C2H2"/>
    <property type="match status" value="10"/>
</dbReference>
<dbReference type="SUPFAM" id="SSF57667">
    <property type="entry name" value="beta-beta-alpha zinc fingers"/>
    <property type="match status" value="5"/>
</dbReference>
<dbReference type="PROSITE" id="PS00028">
    <property type="entry name" value="ZINC_FINGER_C2H2_1"/>
    <property type="match status" value="10"/>
</dbReference>
<dbReference type="PROSITE" id="PS50157">
    <property type="entry name" value="ZINC_FINGER_C2H2_2"/>
    <property type="match status" value="9"/>
</dbReference>
<sequence length="803" mass="84792">MEIPKLLPARGTLQGGGGGGIPAGGGRVHRGPDSPAGQVPTRRLLLLRGPQDGGPGRRREEASTASRGPGPSLLAPRTDQPSGGGGGGGDDFFLVLLDPVGGDVETAGSGQAAGPVLREEAEEGPGLQGGESGANPAGPTALGPRCLSAVPTPAPISAPGPAAAFAGTVTIHNQDLLLRFENGVLTLATPPPHAWEPGAAPAQQPGCLIAPQAGFPHAAHPGDCPELPPDLLLAEPAEPAPAPAPEEEAEGPAAALGPRGPLGSGPGVVLYLCPEAQCGQTFAKKHQLKVHLLTHSSSQGQRPFKCPLGGCGWTFTTSYKLKRHLQSHDKLRPFGCPAEGCGKSFTTVYNLKAHMKGHEQENSFKCEVCEESFPTQAKLSAHQRSHFEPERPYQCAFSGCKKTFITVSALFSHNRAHFREQELFSCSFPGCSKQYDKACRLKIHLRSHTGERPFLCDFDGCGWNFTSMSKLLRHKRKHDDDRRFMCPVEGCGKSFTRAEHLKGHSITHLGTKPFVCPVAGCCARFSARSSLYIHSKKHLQDVDTWKSRCPISSCNKLFTSKHSMKTHMVKRHKVGQDLLAQLEAANSLTPSSELTSQRQNDLSDAEIVSLFSDVPDSTSAALLDTALVNSGILTIDVASVSSTLAGHLPANNNNSVGQAVDPPSLMATSDPPQSLDTSLFFGTAATGFQQSSLNMDEVSSVSVGPLGSLDSLAMKNSSPEPQALTPSSKLTVDTDALTPSSTLCENSVSELLTPTKAEWNVHPDSDFFGQEGETQFGFPNAAGNHGSQKETDLITVTGSSFLV</sequence>
<name>ZXDB_HUMAN</name>
<proteinExistence type="evidence at protein level"/>
<accession>P98169</accession>
<accession>A8K151</accession>
<accession>Q9UBB3</accession>
<evidence type="ECO:0000250" key="1"/>
<evidence type="ECO:0000255" key="2">
    <source>
        <dbReference type="PROSITE-ProRule" id="PRU00042"/>
    </source>
</evidence>
<evidence type="ECO:0000256" key="3">
    <source>
        <dbReference type="SAM" id="MobiDB-lite"/>
    </source>
</evidence>
<evidence type="ECO:0000269" key="4">
    <source>
    </source>
</evidence>
<evidence type="ECO:0000305" key="5"/>